<name>GLGC_LACLA</name>
<proteinExistence type="inferred from homology"/>
<organism>
    <name type="scientific">Lactococcus lactis subsp. lactis (strain IL1403)</name>
    <name type="common">Streptococcus lactis</name>
    <dbReference type="NCBI Taxonomy" id="272623"/>
    <lineage>
        <taxon>Bacteria</taxon>
        <taxon>Bacillati</taxon>
        <taxon>Bacillota</taxon>
        <taxon>Bacilli</taxon>
        <taxon>Lactobacillales</taxon>
        <taxon>Streptococcaceae</taxon>
        <taxon>Lactococcus</taxon>
    </lineage>
</organism>
<accession>Q9CHN1</accession>
<reference key="1">
    <citation type="journal article" date="2001" name="Genome Res.">
        <title>The complete genome sequence of the lactic acid bacterium Lactococcus lactis ssp. lactis IL1403.</title>
        <authorList>
            <person name="Bolotin A."/>
            <person name="Wincker P."/>
            <person name="Mauger S."/>
            <person name="Jaillon O."/>
            <person name="Malarme K."/>
            <person name="Weissenbach J."/>
            <person name="Ehrlich S.D."/>
            <person name="Sorokin A."/>
        </authorList>
    </citation>
    <scope>NUCLEOTIDE SEQUENCE [LARGE SCALE GENOMIC DNA]</scope>
    <source>
        <strain>IL1403</strain>
    </source>
</reference>
<evidence type="ECO:0000255" key="1">
    <source>
        <dbReference type="HAMAP-Rule" id="MF_00624"/>
    </source>
</evidence>
<protein>
    <recommendedName>
        <fullName evidence="1">Glucose-1-phosphate adenylyltransferase</fullName>
        <ecNumber evidence="1">2.7.7.27</ecNumber>
    </recommendedName>
    <alternativeName>
        <fullName evidence="1">ADP-glucose pyrophosphorylase</fullName>
        <shortName evidence="1">ADPGlc PPase</shortName>
    </alternativeName>
    <alternativeName>
        <fullName evidence="1">ADP-glucose synthase</fullName>
    </alternativeName>
</protein>
<gene>
    <name evidence="1" type="primary">glgC</name>
    <name type="ordered locus">LL0697</name>
    <name type="ORF">L95975</name>
</gene>
<comment type="function">
    <text evidence="1">Involved in the biosynthesis of ADP-glucose, a building block required for the elongation reactions to produce glycogen. Catalyzes the reaction between ATP and alpha-D-glucose 1-phosphate (G1P) to produce pyrophosphate and ADP-Glc.</text>
</comment>
<comment type="catalytic activity">
    <reaction evidence="1">
        <text>alpha-D-glucose 1-phosphate + ATP + H(+) = ADP-alpha-D-glucose + diphosphate</text>
        <dbReference type="Rhea" id="RHEA:12120"/>
        <dbReference type="ChEBI" id="CHEBI:15378"/>
        <dbReference type="ChEBI" id="CHEBI:30616"/>
        <dbReference type="ChEBI" id="CHEBI:33019"/>
        <dbReference type="ChEBI" id="CHEBI:57498"/>
        <dbReference type="ChEBI" id="CHEBI:58601"/>
        <dbReference type="EC" id="2.7.7.27"/>
    </reaction>
</comment>
<comment type="pathway">
    <text evidence="1">Glycan biosynthesis; glycogen biosynthesis.</text>
</comment>
<comment type="subunit">
    <text evidence="1">Homotetramer.</text>
</comment>
<comment type="similarity">
    <text evidence="1">Belongs to the bacterial/plant glucose-1-phosphate adenylyltransferase family.</text>
</comment>
<feature type="chain" id="PRO_0000195301" description="Glucose-1-phosphate adenylyltransferase">
    <location>
        <begin position="1"/>
        <end position="380"/>
    </location>
</feature>
<feature type="binding site" evidence="1">
    <location>
        <position position="164"/>
    </location>
    <ligand>
        <name>alpha-D-glucose 1-phosphate</name>
        <dbReference type="ChEBI" id="CHEBI:58601"/>
    </ligand>
</feature>
<feature type="binding site" evidence="1">
    <location>
        <begin position="179"/>
        <end position="180"/>
    </location>
    <ligand>
        <name>alpha-D-glucose 1-phosphate</name>
        <dbReference type="ChEBI" id="CHEBI:58601"/>
    </ligand>
</feature>
<feature type="binding site" evidence="1">
    <location>
        <position position="190"/>
    </location>
    <ligand>
        <name>alpha-D-glucose 1-phosphate</name>
        <dbReference type="ChEBI" id="CHEBI:58601"/>
    </ligand>
</feature>
<dbReference type="EC" id="2.7.7.27" evidence="1"/>
<dbReference type="EMBL" id="AE005176">
    <property type="protein sequence ID" value="AAK04795.1"/>
    <property type="molecule type" value="Genomic_DNA"/>
</dbReference>
<dbReference type="PIR" id="A86712">
    <property type="entry name" value="A86712"/>
</dbReference>
<dbReference type="RefSeq" id="NP_266853.1">
    <property type="nucleotide sequence ID" value="NC_002662.1"/>
</dbReference>
<dbReference type="RefSeq" id="WP_003129630.1">
    <property type="nucleotide sequence ID" value="NC_002662.1"/>
</dbReference>
<dbReference type="SMR" id="Q9CHN1"/>
<dbReference type="PaxDb" id="272623-L95975"/>
<dbReference type="EnsemblBacteria" id="AAK04795">
    <property type="protein sequence ID" value="AAK04795"/>
    <property type="gene ID" value="L95975"/>
</dbReference>
<dbReference type="KEGG" id="lla:L95975"/>
<dbReference type="PATRIC" id="fig|272623.7.peg.748"/>
<dbReference type="eggNOG" id="COG0448">
    <property type="taxonomic scope" value="Bacteria"/>
</dbReference>
<dbReference type="HOGENOM" id="CLU_029499_14_0_9"/>
<dbReference type="OrthoDB" id="9801810at2"/>
<dbReference type="UniPathway" id="UPA00164"/>
<dbReference type="Proteomes" id="UP000002196">
    <property type="component" value="Chromosome"/>
</dbReference>
<dbReference type="GO" id="GO:0005524">
    <property type="term" value="F:ATP binding"/>
    <property type="evidence" value="ECO:0007669"/>
    <property type="project" value="UniProtKB-KW"/>
</dbReference>
<dbReference type="GO" id="GO:0008878">
    <property type="term" value="F:glucose-1-phosphate adenylyltransferase activity"/>
    <property type="evidence" value="ECO:0007669"/>
    <property type="project" value="UniProtKB-UniRule"/>
</dbReference>
<dbReference type="GO" id="GO:0005978">
    <property type="term" value="P:glycogen biosynthetic process"/>
    <property type="evidence" value="ECO:0007669"/>
    <property type="project" value="UniProtKB-UniRule"/>
</dbReference>
<dbReference type="CDD" id="cd02508">
    <property type="entry name" value="ADP_Glucose_PP"/>
    <property type="match status" value="1"/>
</dbReference>
<dbReference type="CDD" id="cd04651">
    <property type="entry name" value="LbH_G1P_AT_C"/>
    <property type="match status" value="1"/>
</dbReference>
<dbReference type="Gene3D" id="2.160.10.10">
    <property type="entry name" value="Hexapeptide repeat proteins"/>
    <property type="match status" value="1"/>
</dbReference>
<dbReference type="Gene3D" id="3.90.550.10">
    <property type="entry name" value="Spore Coat Polysaccharide Biosynthesis Protein SpsA, Chain A"/>
    <property type="match status" value="1"/>
</dbReference>
<dbReference type="HAMAP" id="MF_00624">
    <property type="entry name" value="GlgC"/>
    <property type="match status" value="1"/>
</dbReference>
<dbReference type="InterPro" id="IPR011831">
    <property type="entry name" value="ADP-Glc_PPase"/>
</dbReference>
<dbReference type="InterPro" id="IPR005836">
    <property type="entry name" value="ADP_Glu_pyroP_CS"/>
</dbReference>
<dbReference type="InterPro" id="IPR023049">
    <property type="entry name" value="GlgC_bac"/>
</dbReference>
<dbReference type="InterPro" id="IPR056818">
    <property type="entry name" value="GlmU/GlgC-like_hexapep"/>
</dbReference>
<dbReference type="InterPro" id="IPR005835">
    <property type="entry name" value="NTP_transferase_dom"/>
</dbReference>
<dbReference type="InterPro" id="IPR029044">
    <property type="entry name" value="Nucleotide-diphossugar_trans"/>
</dbReference>
<dbReference type="InterPro" id="IPR011004">
    <property type="entry name" value="Trimer_LpxA-like_sf"/>
</dbReference>
<dbReference type="NCBIfam" id="TIGR02091">
    <property type="entry name" value="glgC"/>
    <property type="match status" value="1"/>
</dbReference>
<dbReference type="NCBIfam" id="NF003670">
    <property type="entry name" value="PRK05293.1"/>
    <property type="match status" value="1"/>
</dbReference>
<dbReference type="PANTHER" id="PTHR43523:SF2">
    <property type="entry name" value="GLUCOSE-1-PHOSPHATE ADENYLYLTRANSFERASE"/>
    <property type="match status" value="1"/>
</dbReference>
<dbReference type="PANTHER" id="PTHR43523">
    <property type="entry name" value="GLUCOSE-1-PHOSPHATE ADENYLYLTRANSFERASE-RELATED"/>
    <property type="match status" value="1"/>
</dbReference>
<dbReference type="Pfam" id="PF24894">
    <property type="entry name" value="Hexapep_GlmU"/>
    <property type="match status" value="1"/>
</dbReference>
<dbReference type="Pfam" id="PF00483">
    <property type="entry name" value="NTP_transferase"/>
    <property type="match status" value="1"/>
</dbReference>
<dbReference type="SUPFAM" id="SSF53448">
    <property type="entry name" value="Nucleotide-diphospho-sugar transferases"/>
    <property type="match status" value="1"/>
</dbReference>
<dbReference type="SUPFAM" id="SSF51161">
    <property type="entry name" value="Trimeric LpxA-like enzymes"/>
    <property type="match status" value="1"/>
</dbReference>
<dbReference type="PROSITE" id="PS00808">
    <property type="entry name" value="ADP_GLC_PYROPHOSPH_1"/>
    <property type="match status" value="1"/>
</dbReference>
<dbReference type="PROSITE" id="PS00809">
    <property type="entry name" value="ADP_GLC_PYROPHOSPH_2"/>
    <property type="match status" value="1"/>
</dbReference>
<dbReference type="PROSITE" id="PS00810">
    <property type="entry name" value="ADP_GLC_PYROPHOSPH_3"/>
    <property type="match status" value="1"/>
</dbReference>
<keyword id="KW-0067">ATP-binding</keyword>
<keyword id="KW-0119">Carbohydrate metabolism</keyword>
<keyword id="KW-0320">Glycogen biosynthesis</keyword>
<keyword id="KW-0321">Glycogen metabolism</keyword>
<keyword id="KW-0547">Nucleotide-binding</keyword>
<keyword id="KW-0548">Nucleotidyltransferase</keyword>
<keyword id="KW-1185">Reference proteome</keyword>
<keyword id="KW-0808">Transferase</keyword>
<sequence length="380" mass="42053">MAIEMLGLILAGGQGTRLGKLTKDVAKPAVPFGGRYRIIDFALSNCANSNVKNVGVITQYQPLTLNAHIGNGAPWGLNGINSGVTILQPYSSQEGSKWFEGTSHAVYQNISYIDQQNPEYVLILSGDHIYKMDYEAMLESHKEREASLTVSVMEVPLEEASRFGIMNTDDNDRIIEFEEKPKEPKSNLASMGIYIFNWKRLREVLVNGYSKGNPMEDFGGDVIPAYIEAGENVFAYRFKGYWKDVGTIDSLHQSSMEFLDLNNELNITDKSWRIYSHNDISAPQFITEKSNVKNALVGDGCYVDGTVLHSILSQNVHVQEGTVIEDSFIMSGTFIGENVTIKNAIIGENAKIGDNVEIIGENEVAVIGHGEIKGENKNEQ</sequence>